<proteinExistence type="inferred from homology"/>
<sequence length="680" mass="75980">MRSRSNGMGKIVGIDLGTTNSVIAVLEGGKPVVIANAEGSRTTPSVVAFGKDGERLVGQLARRQAVLNPQNTFYAVKRFIGREYSELTAESKRVPYTIRRDESGKVRIKCPRLQREFAPEEISAMVLRKLVEDASRYLGEPVTDAVITVPAYFNDSQRQATRDAGRIAGLNVRRIINEPTAAALAYGLDRQQEQTILVFDLGGGTFDVSILEVGDGVFEVKATSGDTQLGGNDFDKLIVDWLAEDFLAKEGIDLRRDRQSLQRLTDAAEKAKIELSGLLETNIDLPFVTATAEGPKHIETTLSRRQFEDLSQGLLQRLRYPVEQALMDAHLTPSQIDAVVLVGGATRMPMVQDLVRQMIGREPKQNVNPDEVVAVGAAIQAGILAGDVKDILLLDVTPLSLGVETIGGVTKVLIPRNTTIPVRRSDIFSTSENNQSQVEIHVVQGERELAAHNKSLGRFKLTGIPPAPRGVPQIQVSFDLDANGLLQVVALDRFSGREQSVVIQGASTLSEEEIQQMLLDAESNAAGDRQRRARIEKRNRSQDLINRAERQLREAAQEFGYQFAAEQRRGIEALVRQLQEAIRNEDDRQIDLTYAALEERLYDFIRQLRLREEEAEDDEEVFKLPNLREAVNKGLDVVRGRERRRDDDEDEWAEPPRTRRSRSYSQRADSAPWDDWDDDW</sequence>
<gene>
    <name type="primary">dnaK3</name>
    <name type="ordered locus">tll2150</name>
</gene>
<name>DNAK3_THEVB</name>
<comment type="function">
    <text evidence="1">Acts as a chaperone.</text>
</comment>
<comment type="induction">
    <text evidence="1">By stress conditions e.g. heat shock (By similarity).</text>
</comment>
<comment type="similarity">
    <text evidence="3">Belongs to the heat shock protein 70 family.</text>
</comment>
<evidence type="ECO:0000250" key="1"/>
<evidence type="ECO:0000256" key="2">
    <source>
        <dbReference type="SAM" id="MobiDB-lite"/>
    </source>
</evidence>
<evidence type="ECO:0000305" key="3"/>
<protein>
    <recommendedName>
        <fullName>Chaperone protein dnaK3</fullName>
    </recommendedName>
    <alternativeName>
        <fullName>HSP70-3</fullName>
    </alternativeName>
    <alternativeName>
        <fullName>Heat shock 70 kDa protein 3</fullName>
    </alternativeName>
    <alternativeName>
        <fullName>Heat shock protein 70-3</fullName>
    </alternativeName>
</protein>
<dbReference type="EMBL" id="BA000039">
    <property type="protein sequence ID" value="BAC09702.1"/>
    <property type="molecule type" value="Genomic_DNA"/>
</dbReference>
<dbReference type="RefSeq" id="NP_682940.1">
    <property type="nucleotide sequence ID" value="NC_004113.1"/>
</dbReference>
<dbReference type="SMR" id="Q8DH10"/>
<dbReference type="STRING" id="197221.gene:10748761"/>
<dbReference type="EnsemblBacteria" id="BAC09702">
    <property type="protein sequence ID" value="BAC09702"/>
    <property type="gene ID" value="BAC09702"/>
</dbReference>
<dbReference type="KEGG" id="tel:tll2150"/>
<dbReference type="PATRIC" id="fig|197221.4.peg.2252"/>
<dbReference type="eggNOG" id="COG0443">
    <property type="taxonomic scope" value="Bacteria"/>
</dbReference>
<dbReference type="Proteomes" id="UP000000440">
    <property type="component" value="Chromosome"/>
</dbReference>
<dbReference type="GO" id="GO:0005524">
    <property type="term" value="F:ATP binding"/>
    <property type="evidence" value="ECO:0007669"/>
    <property type="project" value="UniProtKB-UniRule"/>
</dbReference>
<dbReference type="GO" id="GO:0140662">
    <property type="term" value="F:ATP-dependent protein folding chaperone"/>
    <property type="evidence" value="ECO:0007669"/>
    <property type="project" value="InterPro"/>
</dbReference>
<dbReference type="GO" id="GO:0051082">
    <property type="term" value="F:unfolded protein binding"/>
    <property type="evidence" value="ECO:0007669"/>
    <property type="project" value="InterPro"/>
</dbReference>
<dbReference type="CDD" id="cd10234">
    <property type="entry name" value="ASKHA_NBD_HSP70_DnaK-like"/>
    <property type="match status" value="1"/>
</dbReference>
<dbReference type="FunFam" id="2.60.34.10:FF:000014">
    <property type="entry name" value="Chaperone protein DnaK HSP70"/>
    <property type="match status" value="1"/>
</dbReference>
<dbReference type="FunFam" id="3.30.420.40:FF:000020">
    <property type="entry name" value="Chaperone protein HscA homolog"/>
    <property type="match status" value="1"/>
</dbReference>
<dbReference type="FunFam" id="3.30.420.40:FF:000004">
    <property type="entry name" value="Molecular chaperone DnaK"/>
    <property type="match status" value="1"/>
</dbReference>
<dbReference type="FunFam" id="3.90.640.10:FF:000003">
    <property type="entry name" value="Molecular chaperone DnaK"/>
    <property type="match status" value="1"/>
</dbReference>
<dbReference type="Gene3D" id="3.30.420.40">
    <property type="match status" value="2"/>
</dbReference>
<dbReference type="Gene3D" id="3.90.640.10">
    <property type="entry name" value="Actin, Chain A, domain 4"/>
    <property type="match status" value="1"/>
</dbReference>
<dbReference type="Gene3D" id="2.60.34.10">
    <property type="entry name" value="Substrate Binding Domain Of DNAk, Chain A, domain 1"/>
    <property type="match status" value="1"/>
</dbReference>
<dbReference type="HAMAP" id="MF_00332">
    <property type="entry name" value="DnaK"/>
    <property type="match status" value="1"/>
</dbReference>
<dbReference type="InterPro" id="IPR043129">
    <property type="entry name" value="ATPase_NBD"/>
</dbReference>
<dbReference type="InterPro" id="IPR012725">
    <property type="entry name" value="Chaperone_DnaK"/>
</dbReference>
<dbReference type="InterPro" id="IPR018181">
    <property type="entry name" value="Heat_shock_70_CS"/>
</dbReference>
<dbReference type="InterPro" id="IPR029048">
    <property type="entry name" value="HSP70_C_sf"/>
</dbReference>
<dbReference type="InterPro" id="IPR029047">
    <property type="entry name" value="HSP70_peptide-bd_sf"/>
</dbReference>
<dbReference type="InterPro" id="IPR013126">
    <property type="entry name" value="Hsp_70_fam"/>
</dbReference>
<dbReference type="NCBIfam" id="NF001413">
    <property type="entry name" value="PRK00290.1"/>
    <property type="match status" value="1"/>
</dbReference>
<dbReference type="NCBIfam" id="NF003520">
    <property type="entry name" value="PRK05183.1"/>
    <property type="match status" value="1"/>
</dbReference>
<dbReference type="NCBIfam" id="NF009946">
    <property type="entry name" value="PRK13410.1"/>
    <property type="match status" value="1"/>
</dbReference>
<dbReference type="NCBIfam" id="TIGR02350">
    <property type="entry name" value="prok_dnaK"/>
    <property type="match status" value="1"/>
</dbReference>
<dbReference type="PANTHER" id="PTHR19375">
    <property type="entry name" value="HEAT SHOCK PROTEIN 70KDA"/>
    <property type="match status" value="1"/>
</dbReference>
<dbReference type="Pfam" id="PF00012">
    <property type="entry name" value="HSP70"/>
    <property type="match status" value="1"/>
</dbReference>
<dbReference type="PRINTS" id="PR00301">
    <property type="entry name" value="HEATSHOCK70"/>
</dbReference>
<dbReference type="SUPFAM" id="SSF53067">
    <property type="entry name" value="Actin-like ATPase domain"/>
    <property type="match status" value="2"/>
</dbReference>
<dbReference type="SUPFAM" id="SSF100934">
    <property type="entry name" value="Heat shock protein 70kD (HSP70), C-terminal subdomain"/>
    <property type="match status" value="1"/>
</dbReference>
<dbReference type="SUPFAM" id="SSF100920">
    <property type="entry name" value="Heat shock protein 70kD (HSP70), peptide-binding domain"/>
    <property type="match status" value="1"/>
</dbReference>
<dbReference type="PROSITE" id="PS00297">
    <property type="entry name" value="HSP70_1"/>
    <property type="match status" value="1"/>
</dbReference>
<dbReference type="PROSITE" id="PS00329">
    <property type="entry name" value="HSP70_2"/>
    <property type="match status" value="1"/>
</dbReference>
<dbReference type="PROSITE" id="PS01036">
    <property type="entry name" value="HSP70_3"/>
    <property type="match status" value="1"/>
</dbReference>
<organism>
    <name type="scientific">Thermosynechococcus vestitus (strain NIES-2133 / IAM M-273 / BP-1)</name>
    <dbReference type="NCBI Taxonomy" id="197221"/>
    <lineage>
        <taxon>Bacteria</taxon>
        <taxon>Bacillati</taxon>
        <taxon>Cyanobacteriota</taxon>
        <taxon>Cyanophyceae</taxon>
        <taxon>Acaryochloridales</taxon>
        <taxon>Thermosynechococcaceae</taxon>
        <taxon>Thermosynechococcus</taxon>
    </lineage>
</organism>
<keyword id="KW-0067">ATP-binding</keyword>
<keyword id="KW-0143">Chaperone</keyword>
<keyword id="KW-0547">Nucleotide-binding</keyword>
<keyword id="KW-0597">Phosphoprotein</keyword>
<keyword id="KW-1185">Reference proteome</keyword>
<keyword id="KW-0346">Stress response</keyword>
<reference key="1">
    <citation type="journal article" date="2002" name="DNA Res.">
        <title>Complete genome structure of the thermophilic cyanobacterium Thermosynechococcus elongatus BP-1.</title>
        <authorList>
            <person name="Nakamura Y."/>
            <person name="Kaneko T."/>
            <person name="Sato S."/>
            <person name="Ikeuchi M."/>
            <person name="Katoh H."/>
            <person name="Sasamoto S."/>
            <person name="Watanabe A."/>
            <person name="Iriguchi M."/>
            <person name="Kawashima K."/>
            <person name="Kimura T."/>
            <person name="Kishida Y."/>
            <person name="Kiyokawa C."/>
            <person name="Kohara M."/>
            <person name="Matsumoto M."/>
            <person name="Matsuno A."/>
            <person name="Nakazaki N."/>
            <person name="Shimpo S."/>
            <person name="Sugimoto M."/>
            <person name="Takeuchi C."/>
            <person name="Yamada M."/>
            <person name="Tabata S."/>
        </authorList>
    </citation>
    <scope>NUCLEOTIDE SEQUENCE [LARGE SCALE GENOMIC DNA]</scope>
    <source>
        <strain>NIES-2133 / IAM M-273 / BP-1</strain>
    </source>
</reference>
<feature type="chain" id="PRO_0000078562" description="Chaperone protein dnaK3">
    <location>
        <begin position="1"/>
        <end position="680"/>
    </location>
</feature>
<feature type="region of interest" description="Disordered" evidence="2">
    <location>
        <begin position="640"/>
        <end position="680"/>
    </location>
</feature>
<feature type="modified residue" description="Phosphothreonine; by autocatalysis" evidence="1">
    <location>
        <position position="205"/>
    </location>
</feature>
<accession>Q8DH10</accession>